<reference key="1">
    <citation type="submission" date="2007-12" db="EMBL/GenBank/DDBJ databases">
        <authorList>
            <person name="Yang Y.-K."/>
            <person name="Wang Y.-L."/>
            <person name="Guo Y.-J."/>
            <person name="Lee H.-J."/>
            <person name="Zhong K."/>
            <person name="Zhu H.-S."/>
            <person name="Wang Y.-Y."/>
            <person name="Han L.-Q."/>
            <person name="Wang L.-F."/>
            <person name="Yang G.-Y."/>
        </authorList>
    </citation>
    <scope>NUCLEOTIDE SEQUENCE [MRNA]</scope>
</reference>
<organism>
    <name type="scientific">Ovis aries</name>
    <name type="common">Sheep</name>
    <dbReference type="NCBI Taxonomy" id="9940"/>
    <lineage>
        <taxon>Eukaryota</taxon>
        <taxon>Metazoa</taxon>
        <taxon>Chordata</taxon>
        <taxon>Craniata</taxon>
        <taxon>Vertebrata</taxon>
        <taxon>Euteleostomi</taxon>
        <taxon>Mammalia</taxon>
        <taxon>Eutheria</taxon>
        <taxon>Laurasiatheria</taxon>
        <taxon>Artiodactyla</taxon>
        <taxon>Ruminantia</taxon>
        <taxon>Pecora</taxon>
        <taxon>Bovidae</taxon>
        <taxon>Caprinae</taxon>
        <taxon>Ovis</taxon>
    </lineage>
</organism>
<sequence length="456" mass="50229">MSEDEAAQAPGPSLSEQDQQSAVQRVAALPLIRATCTAVSEAYSAAKDRHPLLGSACRLAEHCVCDLTTRALDHAQPLLSHLQPQLATVNDLACRGLDKLEEKLPFLQQPSETVVTSAKGVVASSVTGMVGLARQGRRWSVELKRSVSHAMDVVLEKSEELVDHFLPMTEEELAALAAEAEGPEVGSVEEQRKHQGYFVRLGSLSTRLRHLAYEHSLGKLRQKKHHAQDTLAQLQETLELIHRMQCGVTPITPARPGKVHELWEDWSQRPLENGRRRHSQAELETLVLSRNLMRELQSTVDALETSVRGLPPSAQEKVAEVRRSVDALQAAFADARRFGDLPAAVLAEGRGSMARAHACVDELLELVVQAMPLPWLVGPFAPILVERPEPPPDLEALVDEVIGGPDPRWAHLDWPAQQRAWQAQHGEGTVLSGNIPEEEPEPPSRPKHTLMPELDF</sequence>
<protein>
    <recommendedName>
        <fullName>Perilipin-5</fullName>
    </recommendedName>
    <alternativeName>
        <fullName>Lipid storage droplet protein 5</fullName>
    </alternativeName>
</protein>
<feature type="chain" id="PRO_0000338984" description="Perilipin-5">
    <location>
        <begin position="1"/>
        <end position="456"/>
    </location>
</feature>
<feature type="region of interest" description="Essential for lipid droplet targeting" evidence="1">
    <location>
        <begin position="1"/>
        <end position="173"/>
    </location>
</feature>
<feature type="region of interest" description="Interaction with LIPE" evidence="1">
    <location>
        <begin position="1"/>
        <end position="108"/>
    </location>
</feature>
<feature type="region of interest" description="Disordered" evidence="5">
    <location>
        <begin position="1"/>
        <end position="20"/>
    </location>
</feature>
<feature type="region of interest" description="Interaction with PNPLA2 and ABHD5" evidence="1">
    <location>
        <begin position="185"/>
        <end position="456"/>
    </location>
</feature>
<feature type="region of interest" description="Disordered" evidence="5">
    <location>
        <begin position="420"/>
        <end position="456"/>
    </location>
</feature>
<feature type="region of interest" description="Recruits mitochondria at the lipid droplet surface" evidence="1">
    <location>
        <begin position="438"/>
        <end position="456"/>
    </location>
</feature>
<feature type="modified residue" description="Phosphoserine" evidence="4">
    <location>
        <position position="2"/>
    </location>
</feature>
<feature type="modified residue" description="Phosphoserine" evidence="4">
    <location>
        <position position="148"/>
    </location>
</feature>
<feature type="modified residue" description="Phosphoserine" evidence="3">
    <location>
        <position position="324"/>
    </location>
</feature>
<proteinExistence type="evidence at transcript level"/>
<gene>
    <name type="primary">Plin5</name>
    <name type="synonym">Lsdp5</name>
</gene>
<comment type="function">
    <text evidence="1">Lipid droplet-associated protein that maintains the balance between lipogenesis and lipolysis and also regulates fatty acid oxidation in oxidative tissues. Recruits mitochondria to the surface of lipid droplets and is involved in lipid droplet homeostasis by regulating both the storage of fatty acids in the form of triglycerides and the release of fatty acids for mitochondrial fatty acid oxidation. In lipid droplet triacylglycerol hydrolysis, plays a role as a scaffolding protein for three major key lipolytic players: ABHD5, PNPLA2 and LIPE. Reduces the triacylglycerol hydrolase activity of PNPLA2 by recruiting and sequestering PNPLA2 to lipid droplets. Phosphorylation by PKA enables lipolysis probably by promoting release of ABHD5 from the perilipin scaffold and by facilitating interaction of ABHD5 with PNPLA2. Also increases lipolysis through interaction with LIPE and upon PKA-mediated phosphorylation of LIPE (By similarity).</text>
</comment>
<comment type="subunit">
    <text evidence="1">Homooligomer. Interacts with PNPLA2; prevents interaction of PNPLA2 with ABHD5. Interacts with ABHD5; targets ABHD5 to lipid droplets and promotes interaction of ABHD5 with PNPLA2. Interacts with LIPE (By similarity).</text>
</comment>
<comment type="subcellular location">
    <subcellularLocation>
        <location evidence="4">Lipid droplet</location>
    </subcellularLocation>
    <subcellularLocation>
        <location evidence="4">Cytoplasm</location>
    </subcellularLocation>
    <subcellularLocation>
        <location evidence="2">Mitochondrion</location>
    </subcellularLocation>
    <text evidence="4">Lipid droplet surface-associated. Exchanges between lipid droplets and the cytoplasm.</text>
</comment>
<comment type="PTM">
    <text evidence="1">Phosphorylated by PKA. Phosphorylated on serine in skeletal muscle at rest or upon lipolytic stimulation (By similarity).</text>
</comment>
<comment type="similarity">
    <text evidence="6">Belongs to the perilipin family.</text>
</comment>
<dbReference type="EMBL" id="EU330921">
    <property type="protein sequence ID" value="ABY53496.1"/>
    <property type="molecule type" value="mRNA"/>
</dbReference>
<dbReference type="RefSeq" id="NP_001107246.1">
    <property type="nucleotide sequence ID" value="NM_001113774.1"/>
</dbReference>
<dbReference type="SMR" id="B0FJL7"/>
<dbReference type="STRING" id="9940.ENSOARP00000010012"/>
<dbReference type="PaxDb" id="9940-ENSOARP00000010012"/>
<dbReference type="GeneID" id="100135434"/>
<dbReference type="KEGG" id="oas:100135434"/>
<dbReference type="CTD" id="440503"/>
<dbReference type="eggNOG" id="KOG4790">
    <property type="taxonomic scope" value="Eukaryota"/>
</dbReference>
<dbReference type="OrthoDB" id="376826at2759"/>
<dbReference type="Proteomes" id="UP000002356">
    <property type="component" value="Unplaced"/>
</dbReference>
<dbReference type="GO" id="GO:0005737">
    <property type="term" value="C:cytoplasm"/>
    <property type="evidence" value="ECO:0000250"/>
    <property type="project" value="UniProtKB"/>
</dbReference>
<dbReference type="GO" id="GO:0005829">
    <property type="term" value="C:cytosol"/>
    <property type="evidence" value="ECO:0007669"/>
    <property type="project" value="TreeGrafter"/>
</dbReference>
<dbReference type="GO" id="GO:0005811">
    <property type="term" value="C:lipid droplet"/>
    <property type="evidence" value="ECO:0007669"/>
    <property type="project" value="UniProtKB-SubCell"/>
</dbReference>
<dbReference type="GO" id="GO:0005739">
    <property type="term" value="C:mitochondrion"/>
    <property type="evidence" value="ECO:0000250"/>
    <property type="project" value="UniProtKB"/>
</dbReference>
<dbReference type="GO" id="GO:0034389">
    <property type="term" value="P:lipid droplet organization"/>
    <property type="evidence" value="ECO:0000250"/>
    <property type="project" value="UniProtKB"/>
</dbReference>
<dbReference type="GO" id="GO:0019915">
    <property type="term" value="P:lipid storage"/>
    <property type="evidence" value="ECO:0007669"/>
    <property type="project" value="TreeGrafter"/>
</dbReference>
<dbReference type="GO" id="GO:0031999">
    <property type="term" value="P:negative regulation of fatty acid beta-oxidation"/>
    <property type="evidence" value="ECO:0000250"/>
    <property type="project" value="UniProtKB"/>
</dbReference>
<dbReference type="GO" id="GO:0060192">
    <property type="term" value="P:negative regulation of lipase activity"/>
    <property type="evidence" value="ECO:0000250"/>
    <property type="project" value="UniProtKB"/>
</dbReference>
<dbReference type="GO" id="GO:0035359">
    <property type="term" value="P:negative regulation of peroxisome proliferator activated receptor signaling pathway"/>
    <property type="evidence" value="ECO:0000250"/>
    <property type="project" value="UniProtKB"/>
</dbReference>
<dbReference type="GO" id="GO:2000378">
    <property type="term" value="P:negative regulation of reactive oxygen species metabolic process"/>
    <property type="evidence" value="ECO:0000250"/>
    <property type="project" value="UniProtKB"/>
</dbReference>
<dbReference type="GO" id="GO:0010897">
    <property type="term" value="P:negative regulation of triglyceride catabolic process"/>
    <property type="evidence" value="ECO:0000250"/>
    <property type="project" value="UniProtKB"/>
</dbReference>
<dbReference type="GO" id="GO:0032000">
    <property type="term" value="P:positive regulation of fatty acid beta-oxidation"/>
    <property type="evidence" value="ECO:0000250"/>
    <property type="project" value="UniProtKB"/>
</dbReference>
<dbReference type="GO" id="GO:0060193">
    <property type="term" value="P:positive regulation of lipase activity"/>
    <property type="evidence" value="ECO:0000250"/>
    <property type="project" value="UniProtKB"/>
</dbReference>
<dbReference type="GO" id="GO:0010884">
    <property type="term" value="P:positive regulation of lipid storage"/>
    <property type="evidence" value="ECO:0000250"/>
    <property type="project" value="UniProtKB"/>
</dbReference>
<dbReference type="GO" id="GO:0010867">
    <property type="term" value="P:positive regulation of triglyceride biosynthetic process"/>
    <property type="evidence" value="ECO:0000250"/>
    <property type="project" value="UniProtKB"/>
</dbReference>
<dbReference type="GO" id="GO:0010890">
    <property type="term" value="P:positive regulation of triglyceride storage"/>
    <property type="evidence" value="ECO:0000250"/>
    <property type="project" value="UniProtKB"/>
</dbReference>
<dbReference type="FunFam" id="1.20.120.340:FF:000004">
    <property type="entry name" value="Perilipin"/>
    <property type="match status" value="1"/>
</dbReference>
<dbReference type="Gene3D" id="1.20.120.340">
    <property type="entry name" value="Flagellar protein FliS"/>
    <property type="match status" value="1"/>
</dbReference>
<dbReference type="Gene3D" id="3.30.720.170">
    <property type="entry name" value="Perilipin, alpha-beta domain"/>
    <property type="match status" value="1"/>
</dbReference>
<dbReference type="InterPro" id="IPR004279">
    <property type="entry name" value="Perilipin"/>
</dbReference>
<dbReference type="PANTHER" id="PTHR14024">
    <property type="entry name" value="PERILIPIN"/>
    <property type="match status" value="1"/>
</dbReference>
<dbReference type="PANTHER" id="PTHR14024:SF9">
    <property type="entry name" value="PERILIPIN-5"/>
    <property type="match status" value="1"/>
</dbReference>
<dbReference type="Pfam" id="PF03036">
    <property type="entry name" value="Perilipin"/>
    <property type="match status" value="1"/>
</dbReference>
<dbReference type="PIRSF" id="PIRSF036881">
    <property type="entry name" value="PAT"/>
    <property type="match status" value="1"/>
</dbReference>
<dbReference type="SUPFAM" id="SSF109775">
    <property type="entry name" value="Mannose-6-phosphate receptor binding protein 1 (Tip47), C-terminal domain"/>
    <property type="match status" value="1"/>
</dbReference>
<accession>B0FJL7</accession>
<name>PLIN5_SHEEP</name>
<keyword id="KW-0963">Cytoplasm</keyword>
<keyword id="KW-0551">Lipid droplet</keyword>
<keyword id="KW-0496">Mitochondrion</keyword>
<keyword id="KW-0597">Phosphoprotein</keyword>
<keyword id="KW-1185">Reference proteome</keyword>
<evidence type="ECO:0000250" key="1"/>
<evidence type="ECO:0000250" key="2">
    <source>
        <dbReference type="UniProtKB" id="M0R7Z9"/>
    </source>
</evidence>
<evidence type="ECO:0000250" key="3">
    <source>
        <dbReference type="UniProtKB" id="Q00G26"/>
    </source>
</evidence>
<evidence type="ECO:0000250" key="4">
    <source>
        <dbReference type="UniProtKB" id="Q8BVZ1"/>
    </source>
</evidence>
<evidence type="ECO:0000256" key="5">
    <source>
        <dbReference type="SAM" id="MobiDB-lite"/>
    </source>
</evidence>
<evidence type="ECO:0000305" key="6"/>